<dbReference type="EC" id="2.1.1.-" evidence="1"/>
<dbReference type="EMBL" id="FM178379">
    <property type="protein sequence ID" value="CAQ80521.1"/>
    <property type="molecule type" value="Genomic_DNA"/>
</dbReference>
<dbReference type="RefSeq" id="WP_012551268.1">
    <property type="nucleotide sequence ID" value="NC_011312.1"/>
</dbReference>
<dbReference type="SMR" id="B6ENA3"/>
<dbReference type="KEGG" id="vsa:VSAL_I2837"/>
<dbReference type="eggNOG" id="COG2264">
    <property type="taxonomic scope" value="Bacteria"/>
</dbReference>
<dbReference type="HOGENOM" id="CLU_049382_4_1_6"/>
<dbReference type="Proteomes" id="UP000001730">
    <property type="component" value="Chromosome 1"/>
</dbReference>
<dbReference type="GO" id="GO:0005829">
    <property type="term" value="C:cytosol"/>
    <property type="evidence" value="ECO:0007669"/>
    <property type="project" value="TreeGrafter"/>
</dbReference>
<dbReference type="GO" id="GO:0016279">
    <property type="term" value="F:protein-lysine N-methyltransferase activity"/>
    <property type="evidence" value="ECO:0007669"/>
    <property type="project" value="TreeGrafter"/>
</dbReference>
<dbReference type="GO" id="GO:0032259">
    <property type="term" value="P:methylation"/>
    <property type="evidence" value="ECO:0007669"/>
    <property type="project" value="UniProtKB-KW"/>
</dbReference>
<dbReference type="CDD" id="cd02440">
    <property type="entry name" value="AdoMet_MTases"/>
    <property type="match status" value="1"/>
</dbReference>
<dbReference type="Gene3D" id="3.40.50.150">
    <property type="entry name" value="Vaccinia Virus protein VP39"/>
    <property type="match status" value="1"/>
</dbReference>
<dbReference type="HAMAP" id="MF_00735">
    <property type="entry name" value="Methyltr_PrmA"/>
    <property type="match status" value="1"/>
</dbReference>
<dbReference type="InterPro" id="IPR050078">
    <property type="entry name" value="Ribosomal_L11_MeTrfase_PrmA"/>
</dbReference>
<dbReference type="InterPro" id="IPR004498">
    <property type="entry name" value="Ribosomal_PrmA_MeTrfase"/>
</dbReference>
<dbReference type="InterPro" id="IPR029063">
    <property type="entry name" value="SAM-dependent_MTases_sf"/>
</dbReference>
<dbReference type="NCBIfam" id="TIGR00406">
    <property type="entry name" value="prmA"/>
    <property type="match status" value="1"/>
</dbReference>
<dbReference type="PANTHER" id="PTHR43648">
    <property type="entry name" value="ELECTRON TRANSFER FLAVOPROTEIN BETA SUBUNIT LYSINE METHYLTRANSFERASE"/>
    <property type="match status" value="1"/>
</dbReference>
<dbReference type="PANTHER" id="PTHR43648:SF1">
    <property type="entry name" value="ELECTRON TRANSFER FLAVOPROTEIN BETA SUBUNIT LYSINE METHYLTRANSFERASE"/>
    <property type="match status" value="1"/>
</dbReference>
<dbReference type="Pfam" id="PF06325">
    <property type="entry name" value="PrmA"/>
    <property type="match status" value="1"/>
</dbReference>
<dbReference type="PIRSF" id="PIRSF000401">
    <property type="entry name" value="RPL11_MTase"/>
    <property type="match status" value="1"/>
</dbReference>
<dbReference type="SUPFAM" id="SSF53335">
    <property type="entry name" value="S-adenosyl-L-methionine-dependent methyltransferases"/>
    <property type="match status" value="1"/>
</dbReference>
<feature type="chain" id="PRO_1000192572" description="Ribosomal protein L11 methyltransferase">
    <location>
        <begin position="1"/>
        <end position="294"/>
    </location>
</feature>
<feature type="binding site" evidence="1">
    <location>
        <position position="146"/>
    </location>
    <ligand>
        <name>S-adenosyl-L-methionine</name>
        <dbReference type="ChEBI" id="CHEBI:59789"/>
    </ligand>
</feature>
<feature type="binding site" evidence="1">
    <location>
        <position position="167"/>
    </location>
    <ligand>
        <name>S-adenosyl-L-methionine</name>
        <dbReference type="ChEBI" id="CHEBI:59789"/>
    </ligand>
</feature>
<feature type="binding site" evidence="1">
    <location>
        <position position="189"/>
    </location>
    <ligand>
        <name>S-adenosyl-L-methionine</name>
        <dbReference type="ChEBI" id="CHEBI:59789"/>
    </ligand>
</feature>
<feature type="binding site" evidence="1">
    <location>
        <position position="231"/>
    </location>
    <ligand>
        <name>S-adenosyl-L-methionine</name>
        <dbReference type="ChEBI" id="CHEBI:59789"/>
    </ligand>
</feature>
<sequence length="294" mass="32108">MPWIQVKLNATSENAELISDMLVEETGALSVTFLDAKDTPIFEPLPGETRLWGETDIVALYDAETDMDLVITQLKASAVLDDNFAYKIEQLEDKDWEREWMDNFHPMKFGERLWICPSWREIPEPDAINVMLDPGLAFGTGTHATTALCLEWLESIDLTGKTVIDFGCGSGILAIAAIKLGAAKVVGIDIDPQAITASKDNATRNGVAEQLTLFLPQDQPENLVADVVVANILAAPLRELSSIITAHVKPGGALAMSGVLDTQANNVASYYSDNFTLDAIAEQQEWCRISGIKK</sequence>
<gene>
    <name evidence="1" type="primary">prmA</name>
    <name type="ordered locus">VSAL_I2837</name>
</gene>
<keyword id="KW-0963">Cytoplasm</keyword>
<keyword id="KW-0489">Methyltransferase</keyword>
<keyword id="KW-0949">S-adenosyl-L-methionine</keyword>
<keyword id="KW-0808">Transferase</keyword>
<evidence type="ECO:0000255" key="1">
    <source>
        <dbReference type="HAMAP-Rule" id="MF_00735"/>
    </source>
</evidence>
<organism>
    <name type="scientific">Aliivibrio salmonicida (strain LFI1238)</name>
    <name type="common">Vibrio salmonicida (strain LFI1238)</name>
    <dbReference type="NCBI Taxonomy" id="316275"/>
    <lineage>
        <taxon>Bacteria</taxon>
        <taxon>Pseudomonadati</taxon>
        <taxon>Pseudomonadota</taxon>
        <taxon>Gammaproteobacteria</taxon>
        <taxon>Vibrionales</taxon>
        <taxon>Vibrionaceae</taxon>
        <taxon>Aliivibrio</taxon>
    </lineage>
</organism>
<name>PRMA_ALISL</name>
<accession>B6ENA3</accession>
<proteinExistence type="inferred from homology"/>
<comment type="function">
    <text evidence="1">Methylates ribosomal protein L11.</text>
</comment>
<comment type="catalytic activity">
    <reaction evidence="1">
        <text>L-lysyl-[protein] + 3 S-adenosyl-L-methionine = N(6),N(6),N(6)-trimethyl-L-lysyl-[protein] + 3 S-adenosyl-L-homocysteine + 3 H(+)</text>
        <dbReference type="Rhea" id="RHEA:54192"/>
        <dbReference type="Rhea" id="RHEA-COMP:9752"/>
        <dbReference type="Rhea" id="RHEA-COMP:13826"/>
        <dbReference type="ChEBI" id="CHEBI:15378"/>
        <dbReference type="ChEBI" id="CHEBI:29969"/>
        <dbReference type="ChEBI" id="CHEBI:57856"/>
        <dbReference type="ChEBI" id="CHEBI:59789"/>
        <dbReference type="ChEBI" id="CHEBI:61961"/>
    </reaction>
</comment>
<comment type="subcellular location">
    <subcellularLocation>
        <location evidence="1">Cytoplasm</location>
    </subcellularLocation>
</comment>
<comment type="similarity">
    <text evidence="1">Belongs to the methyltransferase superfamily. PrmA family.</text>
</comment>
<protein>
    <recommendedName>
        <fullName evidence="1">Ribosomal protein L11 methyltransferase</fullName>
        <shortName evidence="1">L11 Mtase</shortName>
        <ecNumber evidence="1">2.1.1.-</ecNumber>
    </recommendedName>
</protein>
<reference key="1">
    <citation type="journal article" date="2008" name="BMC Genomics">
        <title>The genome sequence of the fish pathogen Aliivibrio salmonicida strain LFI1238 shows extensive evidence of gene decay.</title>
        <authorList>
            <person name="Hjerde E."/>
            <person name="Lorentzen M.S."/>
            <person name="Holden M.T."/>
            <person name="Seeger K."/>
            <person name="Paulsen S."/>
            <person name="Bason N."/>
            <person name="Churcher C."/>
            <person name="Harris D."/>
            <person name="Norbertczak H."/>
            <person name="Quail M.A."/>
            <person name="Sanders S."/>
            <person name="Thurston S."/>
            <person name="Parkhill J."/>
            <person name="Willassen N.P."/>
            <person name="Thomson N.R."/>
        </authorList>
    </citation>
    <scope>NUCLEOTIDE SEQUENCE [LARGE SCALE GENOMIC DNA]</scope>
    <source>
        <strain>LFI1238</strain>
    </source>
</reference>